<dbReference type="EMBL" id="X64346">
    <property type="protein sequence ID" value="CAA45654.1"/>
    <property type="molecule type" value="Genomic_DNA"/>
</dbReference>
<dbReference type="RefSeq" id="NP_040234.1">
    <property type="nucleotide sequence ID" value="NC_001350.1"/>
</dbReference>
<dbReference type="SMR" id="Q01021"/>
<dbReference type="KEGG" id="vg:1682493"/>
<dbReference type="Proteomes" id="UP000000587">
    <property type="component" value="Segment"/>
</dbReference>
<dbReference type="GO" id="GO:0042025">
    <property type="term" value="C:host cell nucleus"/>
    <property type="evidence" value="ECO:0007669"/>
    <property type="project" value="UniProtKB-SubCell"/>
</dbReference>
<dbReference type="GO" id="GO:0019028">
    <property type="term" value="C:viral capsid"/>
    <property type="evidence" value="ECO:0007669"/>
    <property type="project" value="UniProtKB-KW"/>
</dbReference>
<dbReference type="GO" id="GO:0051276">
    <property type="term" value="P:chromosome organization"/>
    <property type="evidence" value="ECO:0007669"/>
    <property type="project" value="InterPro"/>
</dbReference>
<dbReference type="HAMAP" id="MF_04017">
    <property type="entry name" value="HSV_CVC1"/>
    <property type="match status" value="1"/>
</dbReference>
<dbReference type="InterPro" id="IPR007640">
    <property type="entry name" value="UL17-like"/>
</dbReference>
<dbReference type="Pfam" id="PF04559">
    <property type="entry name" value="Herpes_UL17"/>
    <property type="match status" value="1"/>
</dbReference>
<comment type="function">
    <text evidence="1">Capsid vertex-specific component that plays a role during viral DNA encapsidation, assuring correct genome cleavage and presumably stabilizing capsids that contain full-length viral genomes.</text>
</comment>
<comment type="subunit">
    <text evidence="1">Interacts (via C-terminus) with capsid vertex component 2/CVC2.</text>
</comment>
<comment type="subcellular location">
    <subcellularLocation>
        <location evidence="1">Virion</location>
    </subcellularLocation>
    <subcellularLocation>
        <location evidence="1">Host nucleus</location>
    </subcellularLocation>
</comment>
<comment type="similarity">
    <text evidence="1">Belongs to the herpesviridae CVC1 protein family.</text>
</comment>
<evidence type="ECO:0000255" key="1">
    <source>
        <dbReference type="HAMAP-Rule" id="MF_04017"/>
    </source>
</evidence>
<accession>Q01021</accession>
<keyword id="KW-0167">Capsid protein</keyword>
<keyword id="KW-1048">Host nucleus</keyword>
<keyword id="KW-0426">Late protein</keyword>
<keyword id="KW-1185">Reference proteome</keyword>
<keyword id="KW-0231">Viral genome packaging</keyword>
<keyword id="KW-1188">Viral release from host cell</keyword>
<keyword id="KW-0946">Virion</keyword>
<organism>
    <name type="scientific">Saimiriine herpesvirus 2 (strain 11)</name>
    <name type="common">SaHV-2</name>
    <name type="synonym">Herpesvirus saimiri</name>
    <dbReference type="NCBI Taxonomy" id="10383"/>
    <lineage>
        <taxon>Viruses</taxon>
        <taxon>Duplodnaviria</taxon>
        <taxon>Heunggongvirae</taxon>
        <taxon>Peploviricota</taxon>
        <taxon>Herviviricetes</taxon>
        <taxon>Herpesvirales</taxon>
        <taxon>Orthoherpesviridae</taxon>
        <taxon>Gammaherpesvirinae</taxon>
        <taxon>Rhadinovirus</taxon>
        <taxon>Rhadinovirus saimiriinegamma2</taxon>
        <taxon>Saimiriine herpesvirus 2</taxon>
    </lineage>
</organism>
<protein>
    <recommendedName>
        <fullName evidence="1">Capsid vertex component 1</fullName>
    </recommendedName>
</protein>
<feature type="chain" id="PRO_0000115963" description="Capsid vertex component 1">
    <location>
        <begin position="1"/>
        <end position="441"/>
    </location>
</feature>
<sequence length="441" mass="50830">MDVHFDNWRFLSRPDKVIVHLLLPQTFFESHHIPFDPNLTFWSQTRFHHLDFPPTRYVKIWGKLYFSLPGLPSKACPGIAVSLVINIEENMYNPFDMTVLKILLNENIYYIKFFHMELFFPYIAPNSLQDTSIEEPFKNVDHIDAILNTTSPVTNLYKNPLGVLANLLQSRPQSSPRHHFALEDPGKVRGYEQPSLLQTDKAMPKVSYVKHKWSILNSEPTVTCVKHIFTKKSYFICSYPTMSNSQCTSVLDTISVQELAHVSPTAVLDAEKAFLFKHQHRFVNTLEHVCKSKNYAIEQHVPVLIQKDEETASSIKDHFTETCFVLESTVSEASAWVRATFARYLNKPKAFWIDYIRLWEEGVHTLGKSVPELKEDVCEEKMWHLLSLNKEFIHCIRNQGCTGVLVDSNLNAWLILPGGFVIKGHYNITPEDILFVGARYG</sequence>
<name>CVC1_SHV21</name>
<organismHost>
    <name type="scientific">Saimiri sciureus</name>
    <name type="common">Common squirrel monkey</name>
    <dbReference type="NCBI Taxonomy" id="9521"/>
</organismHost>
<proteinExistence type="inferred from homology"/>
<gene>
    <name evidence="1" type="primary">CVC1</name>
    <name type="ordered locus">32</name>
</gene>
<reference key="1">
    <citation type="journal article" date="1992" name="J. Virol.">
        <title>Primary structure of the herpesvirus saimiri genome.</title>
        <authorList>
            <person name="Albrecht J.-C."/>
            <person name="Nicholas J."/>
            <person name="Biller D."/>
            <person name="Cameron K.R."/>
            <person name="Biesinger B."/>
            <person name="Newman C."/>
            <person name="Wittmann S."/>
            <person name="Craxton M.A."/>
            <person name="Coleman H."/>
            <person name="Fleckenstein B."/>
            <person name="Honess R.W."/>
        </authorList>
    </citation>
    <scope>NUCLEOTIDE SEQUENCE [LARGE SCALE GENOMIC DNA]</scope>
</reference>